<proteinExistence type="evidence at protein level"/>
<name>MCH1_YEAST</name>
<comment type="function">
    <text>Probable transporter. Does not act in the transport of monocarboxylic acids across the plasma membrane.</text>
</comment>
<comment type="subcellular location">
    <subcellularLocation>
        <location evidence="2">Vacuole membrane</location>
        <topology evidence="2">Multi-pass membrane protein</topology>
    </subcellularLocation>
</comment>
<comment type="similarity">
    <text evidence="3">Belongs to the major facilitator superfamily.</text>
</comment>
<dbReference type="EMBL" id="Z74102">
    <property type="protein sequence ID" value="CAA98616.1"/>
    <property type="molecule type" value="Genomic_DNA"/>
</dbReference>
<dbReference type="EMBL" id="BK006938">
    <property type="protein sequence ID" value="DAA11802.1"/>
    <property type="molecule type" value="Genomic_DNA"/>
</dbReference>
<dbReference type="PIR" id="S67589">
    <property type="entry name" value="S67589"/>
</dbReference>
<dbReference type="RefSeq" id="NP_010229.1">
    <property type="nucleotide sequence ID" value="NM_001180113.1"/>
</dbReference>
<dbReference type="SMR" id="Q07376"/>
<dbReference type="BioGRID" id="32005">
    <property type="interactions" value="86"/>
</dbReference>
<dbReference type="DIP" id="DIP-5410N"/>
<dbReference type="FunCoup" id="Q07376">
    <property type="interactions" value="43"/>
</dbReference>
<dbReference type="MINT" id="Q07376"/>
<dbReference type="STRING" id="4932.YDL054C"/>
<dbReference type="TCDB" id="2.A.1.75.1">
    <property type="family name" value="the major facilitator superfamily (mfs)"/>
</dbReference>
<dbReference type="GlyCosmos" id="Q07376">
    <property type="glycosylation" value="3 sites, No reported glycans"/>
</dbReference>
<dbReference type="GlyGen" id="Q07376">
    <property type="glycosylation" value="3 sites"/>
</dbReference>
<dbReference type="iPTMnet" id="Q07376"/>
<dbReference type="PaxDb" id="4932-YDL054C"/>
<dbReference type="PeptideAtlas" id="Q07376"/>
<dbReference type="EnsemblFungi" id="YDL054C_mRNA">
    <property type="protein sequence ID" value="YDL054C"/>
    <property type="gene ID" value="YDL054C"/>
</dbReference>
<dbReference type="GeneID" id="851506"/>
<dbReference type="KEGG" id="sce:YDL054C"/>
<dbReference type="AGR" id="SGD:S000002212"/>
<dbReference type="SGD" id="S000002212">
    <property type="gene designation" value="MCH1"/>
</dbReference>
<dbReference type="VEuPathDB" id="FungiDB:YDL054C"/>
<dbReference type="eggNOG" id="ENOG502QTNE">
    <property type="taxonomic scope" value="Eukaryota"/>
</dbReference>
<dbReference type="HOGENOM" id="CLU_012596_3_0_1"/>
<dbReference type="InParanoid" id="Q07376"/>
<dbReference type="OMA" id="PTMWWLA"/>
<dbReference type="OrthoDB" id="199930at2759"/>
<dbReference type="BioCyc" id="YEAST:G3O-29471-MONOMER"/>
<dbReference type="BioGRID-ORCS" id="851506">
    <property type="hits" value="2 hits in 10 CRISPR screens"/>
</dbReference>
<dbReference type="PRO" id="PR:Q07376"/>
<dbReference type="Proteomes" id="UP000002311">
    <property type="component" value="Chromosome IV"/>
</dbReference>
<dbReference type="RNAct" id="Q07376">
    <property type="molecule type" value="protein"/>
</dbReference>
<dbReference type="GO" id="GO:0000329">
    <property type="term" value="C:fungal-type vacuole membrane"/>
    <property type="evidence" value="ECO:0000314"/>
    <property type="project" value="SGD"/>
</dbReference>
<dbReference type="GO" id="GO:0022857">
    <property type="term" value="F:transmembrane transporter activity"/>
    <property type="evidence" value="ECO:0007669"/>
    <property type="project" value="InterPro"/>
</dbReference>
<dbReference type="CDD" id="cd17314">
    <property type="entry name" value="MFS_MCT_like"/>
    <property type="match status" value="1"/>
</dbReference>
<dbReference type="FunFam" id="1.20.1250.20:FF:000758">
    <property type="entry name" value="Mch1p"/>
    <property type="match status" value="1"/>
</dbReference>
<dbReference type="Gene3D" id="1.20.1250.20">
    <property type="entry name" value="MFS general substrate transporter like domains"/>
    <property type="match status" value="1"/>
</dbReference>
<dbReference type="InterPro" id="IPR011701">
    <property type="entry name" value="MFS"/>
</dbReference>
<dbReference type="InterPro" id="IPR036259">
    <property type="entry name" value="MFS_trans_sf"/>
</dbReference>
<dbReference type="PANTHER" id="PTHR21576:SF45">
    <property type="entry name" value="TRANSPORTER MCH1-RELATED"/>
    <property type="match status" value="1"/>
</dbReference>
<dbReference type="PANTHER" id="PTHR21576">
    <property type="entry name" value="UNCHARACTERIZED NODULIN-LIKE PROTEIN"/>
    <property type="match status" value="1"/>
</dbReference>
<dbReference type="Pfam" id="PF07690">
    <property type="entry name" value="MFS_1"/>
    <property type="match status" value="1"/>
</dbReference>
<dbReference type="SUPFAM" id="SSF103473">
    <property type="entry name" value="MFS general substrate transporter"/>
    <property type="match status" value="1"/>
</dbReference>
<gene>
    <name type="primary">MCH1</name>
    <name type="ordered locus">YDL054C</name>
</gene>
<organism>
    <name type="scientific">Saccharomyces cerevisiae (strain ATCC 204508 / S288c)</name>
    <name type="common">Baker's yeast</name>
    <dbReference type="NCBI Taxonomy" id="559292"/>
    <lineage>
        <taxon>Eukaryota</taxon>
        <taxon>Fungi</taxon>
        <taxon>Dikarya</taxon>
        <taxon>Ascomycota</taxon>
        <taxon>Saccharomycotina</taxon>
        <taxon>Saccharomycetes</taxon>
        <taxon>Saccharomycetales</taxon>
        <taxon>Saccharomycetaceae</taxon>
        <taxon>Saccharomyces</taxon>
    </lineage>
</organism>
<sequence length="486" mass="53566">MPLSKVEHYLSYHTRLLLPHVLSLQSSHRVAYIFSLLSAVSTGFITLISLYSQPWQKHLNYSSWQINTIASMTNLGMYLTPPILGMIADSHGPITLSLLAIIGFIPSYSYLAYVFNHPELSLGGNGDSSFNLSIICFVFIGISTSALYFSALLTCTKLYPHTKLLSISLPTTCYGISSVVGSQLLRIKWFWSSNASSSSSNSDLNLGRVFQTFALVYVVIGLLAWIATSVVSLLHFNEEQDNQKRLDDQTDVEQSPLLERSNHVQEKFTQTMLRIFSDPVTYILAVSILLSLGPLEMFIANMGSLTNLLVQLDAPTLSTKLLSTYALSSTFTRLLTGIVADFFAKKKISIKWILLTFLSLGVCAQLFLLKMTSSASPWGLVPTGSLVGIVYGGLFTVYPTLVLLVWGERSFGTVYGSLLIAPAIGSMIFCMLYAKFYDSRCMSGGGDLRNPSCISAVYKYSSIAFVVSAVLSAVVFWKLKSRKLRI</sequence>
<feature type="chain" id="PRO_0000084877" description="Probable transporter MCH1">
    <location>
        <begin position="1"/>
        <end position="486"/>
    </location>
</feature>
<feature type="topological domain" description="Cytoplasmic" evidence="1">
    <location>
        <begin position="1"/>
        <end position="29"/>
    </location>
</feature>
<feature type="transmembrane region" description="Helical" evidence="1">
    <location>
        <begin position="30"/>
        <end position="50"/>
    </location>
</feature>
<feature type="topological domain" description="Vacuolar" evidence="1">
    <location>
        <begin position="51"/>
        <end position="67"/>
    </location>
</feature>
<feature type="transmembrane region" description="Helical" evidence="1">
    <location>
        <begin position="68"/>
        <end position="88"/>
    </location>
</feature>
<feature type="topological domain" description="Cytoplasmic" evidence="1">
    <location>
        <begin position="89"/>
        <end position="93"/>
    </location>
</feature>
<feature type="transmembrane region" description="Helical" evidence="1">
    <location>
        <begin position="94"/>
        <end position="114"/>
    </location>
</feature>
<feature type="topological domain" description="Vacuolar" evidence="1">
    <location>
        <begin position="115"/>
        <end position="133"/>
    </location>
</feature>
<feature type="transmembrane region" description="Helical" evidence="1">
    <location>
        <begin position="134"/>
        <end position="154"/>
    </location>
</feature>
<feature type="topological domain" description="Cytoplasmic" evidence="1">
    <location>
        <begin position="155"/>
        <end position="163"/>
    </location>
</feature>
<feature type="transmembrane region" description="Helical" evidence="1">
    <location>
        <begin position="164"/>
        <end position="184"/>
    </location>
</feature>
<feature type="topological domain" description="Vacuolar" evidence="1">
    <location>
        <begin position="185"/>
        <end position="212"/>
    </location>
</feature>
<feature type="transmembrane region" description="Helical" evidence="1">
    <location>
        <begin position="213"/>
        <end position="233"/>
    </location>
</feature>
<feature type="topological domain" description="Cytoplasmic" evidence="1">
    <location>
        <begin position="234"/>
        <end position="279"/>
    </location>
</feature>
<feature type="transmembrane region" description="Helical" evidence="1">
    <location>
        <begin position="280"/>
        <end position="300"/>
    </location>
</feature>
<feature type="topological domain" description="Vacuolar" evidence="1">
    <location>
        <begin position="301"/>
        <end position="320"/>
    </location>
</feature>
<feature type="transmembrane region" description="Helical" evidence="1">
    <location>
        <begin position="321"/>
        <end position="343"/>
    </location>
</feature>
<feature type="topological domain" description="Cytoplasmic" evidence="1">
    <location>
        <begin position="344"/>
        <end position="347"/>
    </location>
</feature>
<feature type="transmembrane region" description="Helical" evidence="1">
    <location>
        <begin position="348"/>
        <end position="368"/>
    </location>
</feature>
<feature type="topological domain" description="Vacuolar" evidence="1">
    <location>
        <begin position="369"/>
        <end position="385"/>
    </location>
</feature>
<feature type="transmembrane region" description="Helical" evidence="1">
    <location>
        <begin position="386"/>
        <end position="406"/>
    </location>
</feature>
<feature type="topological domain" description="Cytoplasmic" evidence="1">
    <location>
        <begin position="407"/>
        <end position="413"/>
    </location>
</feature>
<feature type="transmembrane region" description="Helical" evidence="1">
    <location>
        <begin position="414"/>
        <end position="434"/>
    </location>
</feature>
<feature type="topological domain" description="Vacuolar" evidence="1">
    <location>
        <begin position="435"/>
        <end position="456"/>
    </location>
</feature>
<feature type="transmembrane region" description="Helical" evidence="1">
    <location>
        <begin position="457"/>
        <end position="477"/>
    </location>
</feature>
<feature type="topological domain" description="Cytoplasmic" evidence="1">
    <location>
        <begin position="478"/>
        <end position="486"/>
    </location>
</feature>
<feature type="modified residue" description="Phosphoserine" evidence="4">
    <location>
        <position position="255"/>
    </location>
</feature>
<feature type="glycosylation site" description="N-linked (GlcNAc...) asparagine" evidence="1">
    <location>
        <position position="60"/>
    </location>
</feature>
<feature type="glycosylation site" description="N-linked (GlcNAc...) asparagine" evidence="1">
    <location>
        <position position="131"/>
    </location>
</feature>
<feature type="glycosylation site" description="N-linked (GlcNAc...) asparagine" evidence="1">
    <location>
        <position position="194"/>
    </location>
</feature>
<reference key="1">
    <citation type="journal article" date="1997" name="Nature">
        <title>The nucleotide sequence of Saccharomyces cerevisiae chromosome IV.</title>
        <authorList>
            <person name="Jacq C."/>
            <person name="Alt-Moerbe J."/>
            <person name="Andre B."/>
            <person name="Arnold W."/>
            <person name="Bahr A."/>
            <person name="Ballesta J.P.G."/>
            <person name="Bargues M."/>
            <person name="Baron L."/>
            <person name="Becker A."/>
            <person name="Biteau N."/>
            <person name="Bloecker H."/>
            <person name="Blugeon C."/>
            <person name="Boskovic J."/>
            <person name="Brandt P."/>
            <person name="Brueckner M."/>
            <person name="Buitrago M.J."/>
            <person name="Coster F."/>
            <person name="Delaveau T."/>
            <person name="del Rey F."/>
            <person name="Dujon B."/>
            <person name="Eide L.G."/>
            <person name="Garcia-Cantalejo J.M."/>
            <person name="Goffeau A."/>
            <person name="Gomez-Peris A."/>
            <person name="Granotier C."/>
            <person name="Hanemann V."/>
            <person name="Hankeln T."/>
            <person name="Hoheisel J.D."/>
            <person name="Jaeger W."/>
            <person name="Jimenez A."/>
            <person name="Jonniaux J.-L."/>
            <person name="Kraemer C."/>
            <person name="Kuester H."/>
            <person name="Laamanen P."/>
            <person name="Legros Y."/>
            <person name="Louis E.J."/>
            <person name="Moeller-Rieker S."/>
            <person name="Monnet A."/>
            <person name="Moro M."/>
            <person name="Mueller-Auer S."/>
            <person name="Nussbaumer B."/>
            <person name="Paricio N."/>
            <person name="Paulin L."/>
            <person name="Perea J."/>
            <person name="Perez-Alonso M."/>
            <person name="Perez-Ortin J.E."/>
            <person name="Pohl T.M."/>
            <person name="Prydz H."/>
            <person name="Purnelle B."/>
            <person name="Rasmussen S.W."/>
            <person name="Remacha M.A."/>
            <person name="Revuelta J.L."/>
            <person name="Rieger M."/>
            <person name="Salom D."/>
            <person name="Saluz H.P."/>
            <person name="Saiz J.E."/>
            <person name="Saren A.-M."/>
            <person name="Schaefer M."/>
            <person name="Scharfe M."/>
            <person name="Schmidt E.R."/>
            <person name="Schneider C."/>
            <person name="Scholler P."/>
            <person name="Schwarz S."/>
            <person name="Soler-Mira A."/>
            <person name="Urrestarazu L.A."/>
            <person name="Verhasselt P."/>
            <person name="Vissers S."/>
            <person name="Voet M."/>
            <person name="Volckaert G."/>
            <person name="Wagner G."/>
            <person name="Wambutt R."/>
            <person name="Wedler E."/>
            <person name="Wedler H."/>
            <person name="Woelfl S."/>
            <person name="Harris D.E."/>
            <person name="Bowman S."/>
            <person name="Brown D."/>
            <person name="Churcher C.M."/>
            <person name="Connor R."/>
            <person name="Dedman K."/>
            <person name="Gentles S."/>
            <person name="Hamlin N."/>
            <person name="Hunt S."/>
            <person name="Jones L."/>
            <person name="McDonald S."/>
            <person name="Murphy L.D."/>
            <person name="Niblett D."/>
            <person name="Odell C."/>
            <person name="Oliver K."/>
            <person name="Rajandream M.A."/>
            <person name="Richards C."/>
            <person name="Shore L."/>
            <person name="Walsh S.V."/>
            <person name="Barrell B.G."/>
            <person name="Dietrich F.S."/>
            <person name="Mulligan J.T."/>
            <person name="Allen E."/>
            <person name="Araujo R."/>
            <person name="Aviles E."/>
            <person name="Berno A."/>
            <person name="Carpenter J."/>
            <person name="Chen E."/>
            <person name="Cherry J.M."/>
            <person name="Chung E."/>
            <person name="Duncan M."/>
            <person name="Hunicke-Smith S."/>
            <person name="Hyman R.W."/>
            <person name="Komp C."/>
            <person name="Lashkari D."/>
            <person name="Lew H."/>
            <person name="Lin D."/>
            <person name="Mosedale D."/>
            <person name="Nakahara K."/>
            <person name="Namath A."/>
            <person name="Oefner P."/>
            <person name="Oh C."/>
            <person name="Petel F.X."/>
            <person name="Roberts D."/>
            <person name="Schramm S."/>
            <person name="Schroeder M."/>
            <person name="Shogren T."/>
            <person name="Shroff N."/>
            <person name="Winant A."/>
            <person name="Yelton M.A."/>
            <person name="Botstein D."/>
            <person name="Davis R.W."/>
            <person name="Johnston M."/>
            <person name="Andrews S."/>
            <person name="Brinkman R."/>
            <person name="Cooper J."/>
            <person name="Ding H."/>
            <person name="Du Z."/>
            <person name="Favello A."/>
            <person name="Fulton L."/>
            <person name="Gattung S."/>
            <person name="Greco T."/>
            <person name="Hallsworth K."/>
            <person name="Hawkins J."/>
            <person name="Hillier L.W."/>
            <person name="Jier M."/>
            <person name="Johnson D."/>
            <person name="Johnston L."/>
            <person name="Kirsten J."/>
            <person name="Kucaba T."/>
            <person name="Langston Y."/>
            <person name="Latreille P."/>
            <person name="Le T."/>
            <person name="Mardis E."/>
            <person name="Menezes S."/>
            <person name="Miller N."/>
            <person name="Nhan M."/>
            <person name="Pauley A."/>
            <person name="Peluso D."/>
            <person name="Rifkin L."/>
            <person name="Riles L."/>
            <person name="Taich A."/>
            <person name="Trevaskis E."/>
            <person name="Vignati D."/>
            <person name="Wilcox L."/>
            <person name="Wohldman P."/>
            <person name="Vaudin M."/>
            <person name="Wilson R."/>
            <person name="Waterston R."/>
            <person name="Albermann K."/>
            <person name="Hani J."/>
            <person name="Heumann K."/>
            <person name="Kleine K."/>
            <person name="Mewes H.-W."/>
            <person name="Zollner A."/>
            <person name="Zaccaria P."/>
        </authorList>
    </citation>
    <scope>NUCLEOTIDE SEQUENCE [LARGE SCALE GENOMIC DNA]</scope>
    <source>
        <strain>ATCC 204508 / S288c</strain>
    </source>
</reference>
<reference key="2">
    <citation type="journal article" date="2014" name="G3 (Bethesda)">
        <title>The reference genome sequence of Saccharomyces cerevisiae: Then and now.</title>
        <authorList>
            <person name="Engel S.R."/>
            <person name="Dietrich F.S."/>
            <person name="Fisk D.G."/>
            <person name="Binkley G."/>
            <person name="Balakrishnan R."/>
            <person name="Costanzo M.C."/>
            <person name="Dwight S.S."/>
            <person name="Hitz B.C."/>
            <person name="Karra K."/>
            <person name="Nash R.S."/>
            <person name="Weng S."/>
            <person name="Wong E.D."/>
            <person name="Lloyd P."/>
            <person name="Skrzypek M.S."/>
            <person name="Miyasato S.R."/>
            <person name="Simison M."/>
            <person name="Cherry J.M."/>
        </authorList>
    </citation>
    <scope>GENOME REANNOTATION</scope>
    <source>
        <strain>ATCC 204508 / S288c</strain>
    </source>
</reference>
<reference key="3">
    <citation type="journal article" date="2003" name="Nature">
        <title>Global analysis of protein localization in budding yeast.</title>
        <authorList>
            <person name="Huh W.-K."/>
            <person name="Falvo J.V."/>
            <person name="Gerke L.C."/>
            <person name="Carroll A.S."/>
            <person name="Howson R.W."/>
            <person name="Weissman J.S."/>
            <person name="O'Shea E.K."/>
        </authorList>
    </citation>
    <scope>SUBCELLULAR LOCATION [LARGE SCALE ANALYSIS]</scope>
</reference>
<reference key="4">
    <citation type="journal article" date="2001" name="Yeast">
        <title>The putative monocarboxylate permeases of the yeast Saccharomyces cerevisiae do not transport monocarboxylic acids across the plasma membrane.</title>
        <authorList>
            <person name="Makuc J."/>
            <person name="Paiva S."/>
            <person name="Schauen M."/>
            <person name="Kramer R."/>
            <person name="Andre B."/>
            <person name="Casal M."/>
            <person name="Leao C."/>
            <person name="Boles E."/>
        </authorList>
    </citation>
    <scope>LACK OF FUNCTION AS A MONOCARBOXYLATE TRANSPORTER</scope>
</reference>
<reference key="5">
    <citation type="journal article" date="2006" name="Proc. Natl. Acad. Sci. U.S.A.">
        <title>A global topology map of the Saccharomyces cerevisiae membrane proteome.</title>
        <authorList>
            <person name="Kim H."/>
            <person name="Melen K."/>
            <person name="Oesterberg M."/>
            <person name="von Heijne G."/>
        </authorList>
    </citation>
    <scope>TOPOLOGY [LARGE SCALE ANALYSIS]</scope>
    <source>
        <strain>ATCC 208353 / W303-1A</strain>
    </source>
</reference>
<reference key="6">
    <citation type="journal article" date="2008" name="Mol. Cell. Proteomics">
        <title>A multidimensional chromatography technology for in-depth phosphoproteome analysis.</title>
        <authorList>
            <person name="Albuquerque C.P."/>
            <person name="Smolka M.B."/>
            <person name="Payne S.H."/>
            <person name="Bafna V."/>
            <person name="Eng J."/>
            <person name="Zhou H."/>
        </authorList>
    </citation>
    <scope>PHOSPHORYLATION [LARGE SCALE ANALYSIS] AT SER-255</scope>
    <scope>IDENTIFICATION BY MASS SPECTROMETRY [LARGE SCALE ANALYSIS]</scope>
</reference>
<protein>
    <recommendedName>
        <fullName>Probable transporter MCH1</fullName>
    </recommendedName>
    <alternativeName>
        <fullName>Monocarboxylate transporter homolog 1</fullName>
    </alternativeName>
</protein>
<accession>Q07376</accession>
<accession>D6VRU2</accession>
<evidence type="ECO:0000255" key="1"/>
<evidence type="ECO:0000269" key="2">
    <source>
    </source>
</evidence>
<evidence type="ECO:0000305" key="3"/>
<evidence type="ECO:0007744" key="4">
    <source>
    </source>
</evidence>
<keyword id="KW-0325">Glycoprotein</keyword>
<keyword id="KW-0472">Membrane</keyword>
<keyword id="KW-0597">Phosphoprotein</keyword>
<keyword id="KW-1185">Reference proteome</keyword>
<keyword id="KW-0812">Transmembrane</keyword>
<keyword id="KW-1133">Transmembrane helix</keyword>
<keyword id="KW-0813">Transport</keyword>
<keyword id="KW-0926">Vacuole</keyword>